<keyword id="KW-0143">Chaperone</keyword>
<keyword id="KW-0963">Cytoplasm</keyword>
<keyword id="KW-0690">Ribosome biogenesis</keyword>
<keyword id="KW-0698">rRNA processing</keyword>
<organism>
    <name type="scientific">Streptococcus suis (strain 05ZYH33)</name>
    <dbReference type="NCBI Taxonomy" id="391295"/>
    <lineage>
        <taxon>Bacteria</taxon>
        <taxon>Bacillati</taxon>
        <taxon>Bacillota</taxon>
        <taxon>Bacilli</taxon>
        <taxon>Lactobacillales</taxon>
        <taxon>Streptococcaceae</taxon>
        <taxon>Streptococcus</taxon>
    </lineage>
</organism>
<accession>A4VUJ6</accession>
<comment type="function">
    <text evidence="1">An accessory protein needed during the final step in the assembly of 30S ribosomal subunit, possibly for assembly of the head region. Essential for efficient processing of 16S rRNA. May be needed both before and after RbfA during the maturation of 16S rRNA. It has affinity for free ribosomal 30S subunits but not for 70S ribosomes.</text>
</comment>
<comment type="subunit">
    <text evidence="1">Binds ribosomal protein uS19.</text>
</comment>
<comment type="subcellular location">
    <subcellularLocation>
        <location evidence="1">Cytoplasm</location>
    </subcellularLocation>
</comment>
<comment type="domain">
    <text evidence="1">The PRC barrel domain binds ribosomal protein uS19.</text>
</comment>
<comment type="similarity">
    <text evidence="1">Belongs to the RimM family.</text>
</comment>
<gene>
    <name evidence="1" type="primary">rimM</name>
    <name type="ordered locus">SSU05_0819</name>
</gene>
<reference key="1">
    <citation type="journal article" date="2007" name="PLoS ONE">
        <title>A glimpse of streptococcal toxic shock syndrome from comparative genomics of S. suis 2 Chinese isolates.</title>
        <authorList>
            <person name="Chen C."/>
            <person name="Tang J."/>
            <person name="Dong W."/>
            <person name="Wang C."/>
            <person name="Feng Y."/>
            <person name="Wang J."/>
            <person name="Zheng F."/>
            <person name="Pan X."/>
            <person name="Liu D."/>
            <person name="Li M."/>
            <person name="Song Y."/>
            <person name="Zhu X."/>
            <person name="Sun H."/>
            <person name="Feng T."/>
            <person name="Guo Z."/>
            <person name="Ju A."/>
            <person name="Ge J."/>
            <person name="Dong Y."/>
            <person name="Sun W."/>
            <person name="Jiang Y."/>
            <person name="Wang J."/>
            <person name="Yan J."/>
            <person name="Yang H."/>
            <person name="Wang X."/>
            <person name="Gao G.F."/>
            <person name="Yang R."/>
            <person name="Wang J."/>
            <person name="Yu J."/>
        </authorList>
    </citation>
    <scope>NUCLEOTIDE SEQUENCE [LARGE SCALE GENOMIC DNA]</scope>
    <source>
        <strain>05ZYH33</strain>
    </source>
</reference>
<dbReference type="EMBL" id="CP000407">
    <property type="protein sequence ID" value="ABP89785.1"/>
    <property type="molecule type" value="Genomic_DNA"/>
</dbReference>
<dbReference type="SMR" id="A4VUJ6"/>
<dbReference type="STRING" id="391295.SSU05_0819"/>
<dbReference type="KEGG" id="ssu:SSU05_0819"/>
<dbReference type="eggNOG" id="COG0806">
    <property type="taxonomic scope" value="Bacteria"/>
</dbReference>
<dbReference type="HOGENOM" id="CLU_077636_3_1_9"/>
<dbReference type="GO" id="GO:0005737">
    <property type="term" value="C:cytoplasm"/>
    <property type="evidence" value="ECO:0007669"/>
    <property type="project" value="UniProtKB-SubCell"/>
</dbReference>
<dbReference type="GO" id="GO:0005840">
    <property type="term" value="C:ribosome"/>
    <property type="evidence" value="ECO:0007669"/>
    <property type="project" value="InterPro"/>
</dbReference>
<dbReference type="GO" id="GO:0043022">
    <property type="term" value="F:ribosome binding"/>
    <property type="evidence" value="ECO:0007669"/>
    <property type="project" value="InterPro"/>
</dbReference>
<dbReference type="GO" id="GO:0042274">
    <property type="term" value="P:ribosomal small subunit biogenesis"/>
    <property type="evidence" value="ECO:0007669"/>
    <property type="project" value="UniProtKB-UniRule"/>
</dbReference>
<dbReference type="GO" id="GO:0006364">
    <property type="term" value="P:rRNA processing"/>
    <property type="evidence" value="ECO:0007669"/>
    <property type="project" value="UniProtKB-UniRule"/>
</dbReference>
<dbReference type="Gene3D" id="2.30.30.240">
    <property type="entry name" value="PRC-barrel domain"/>
    <property type="match status" value="1"/>
</dbReference>
<dbReference type="Gene3D" id="2.40.30.60">
    <property type="entry name" value="RimM"/>
    <property type="match status" value="1"/>
</dbReference>
<dbReference type="HAMAP" id="MF_00014">
    <property type="entry name" value="Ribosome_mat_RimM"/>
    <property type="match status" value="1"/>
</dbReference>
<dbReference type="InterPro" id="IPR027275">
    <property type="entry name" value="PRC-brl_dom"/>
</dbReference>
<dbReference type="InterPro" id="IPR011033">
    <property type="entry name" value="PRC_barrel-like_sf"/>
</dbReference>
<dbReference type="InterPro" id="IPR011961">
    <property type="entry name" value="RimM"/>
</dbReference>
<dbReference type="InterPro" id="IPR002676">
    <property type="entry name" value="RimM_N"/>
</dbReference>
<dbReference type="InterPro" id="IPR036976">
    <property type="entry name" value="RimM_N_sf"/>
</dbReference>
<dbReference type="InterPro" id="IPR009000">
    <property type="entry name" value="Transl_B-barrel_sf"/>
</dbReference>
<dbReference type="NCBIfam" id="TIGR02273">
    <property type="entry name" value="16S_RimM"/>
    <property type="match status" value="1"/>
</dbReference>
<dbReference type="PANTHER" id="PTHR33692">
    <property type="entry name" value="RIBOSOME MATURATION FACTOR RIMM"/>
    <property type="match status" value="1"/>
</dbReference>
<dbReference type="PANTHER" id="PTHR33692:SF1">
    <property type="entry name" value="RIBOSOME MATURATION FACTOR RIMM"/>
    <property type="match status" value="1"/>
</dbReference>
<dbReference type="Pfam" id="PF05239">
    <property type="entry name" value="PRC"/>
    <property type="match status" value="1"/>
</dbReference>
<dbReference type="Pfam" id="PF01782">
    <property type="entry name" value="RimM"/>
    <property type="match status" value="1"/>
</dbReference>
<dbReference type="SUPFAM" id="SSF50346">
    <property type="entry name" value="PRC-barrel domain"/>
    <property type="match status" value="1"/>
</dbReference>
<dbReference type="SUPFAM" id="SSF50447">
    <property type="entry name" value="Translation proteins"/>
    <property type="match status" value="1"/>
</dbReference>
<protein>
    <recommendedName>
        <fullName evidence="1">Ribosome maturation factor RimM</fullName>
    </recommendedName>
</protein>
<sequence>MNYFNVGKIVNTQGLQGEMRVLSVTDFAEERFKKGAKLALFDDKDQFAMEVEIASHRKAKNFDIIKFKGMYHINDIEKYKGFSLKIAEENLTDLEDGEFYYHEIIGLDVYENDILIGQIKEILQPGANDVWVVKRKGKKDLLLPYIPPVVLNIDIPNNRVDVELLEGLDDEN</sequence>
<proteinExistence type="inferred from homology"/>
<evidence type="ECO:0000255" key="1">
    <source>
        <dbReference type="HAMAP-Rule" id="MF_00014"/>
    </source>
</evidence>
<name>RIMM_STRSY</name>
<feature type="chain" id="PRO_1000001240" description="Ribosome maturation factor RimM">
    <location>
        <begin position="1"/>
        <end position="172"/>
    </location>
</feature>
<feature type="domain" description="PRC barrel" evidence="1">
    <location>
        <begin position="96"/>
        <end position="168"/>
    </location>
</feature>